<organism>
    <name type="scientific">Xenopus laevis</name>
    <name type="common">African clawed frog</name>
    <dbReference type="NCBI Taxonomy" id="8355"/>
    <lineage>
        <taxon>Eukaryota</taxon>
        <taxon>Metazoa</taxon>
        <taxon>Chordata</taxon>
        <taxon>Craniata</taxon>
        <taxon>Vertebrata</taxon>
        <taxon>Euteleostomi</taxon>
        <taxon>Amphibia</taxon>
        <taxon>Batrachia</taxon>
        <taxon>Anura</taxon>
        <taxon>Pipoidea</taxon>
        <taxon>Pipidae</taxon>
        <taxon>Xenopodinae</taxon>
        <taxon>Xenopus</taxon>
        <taxon>Xenopus</taxon>
    </lineage>
</organism>
<dbReference type="EMBL" id="BC047970">
    <property type="protein sequence ID" value="AAH47970.1"/>
    <property type="molecule type" value="mRNA"/>
</dbReference>
<dbReference type="RefSeq" id="NP_001079697.1">
    <property type="nucleotide sequence ID" value="NM_001086228.1"/>
</dbReference>
<dbReference type="GeneID" id="379384"/>
<dbReference type="KEGG" id="xla:379384"/>
<dbReference type="AGR" id="Xenbase:XB-GENE-1004666"/>
<dbReference type="CTD" id="379384"/>
<dbReference type="Xenbase" id="XB-GENE-1004666">
    <property type="gene designation" value="ppp4r3b.S"/>
</dbReference>
<dbReference type="OMA" id="HFFYKHC"/>
<dbReference type="OrthoDB" id="27483at2759"/>
<dbReference type="Proteomes" id="UP000186698">
    <property type="component" value="Chromosome 5S"/>
</dbReference>
<dbReference type="Bgee" id="379384">
    <property type="expression patterns" value="Expressed in blastula and 19 other cell types or tissues"/>
</dbReference>
<dbReference type="GO" id="GO:0005654">
    <property type="term" value="C:nucleoplasm"/>
    <property type="evidence" value="ECO:0000318"/>
    <property type="project" value="GO_Central"/>
</dbReference>
<dbReference type="GO" id="GO:0030289">
    <property type="term" value="C:protein phosphatase 4 complex"/>
    <property type="evidence" value="ECO:0000318"/>
    <property type="project" value="GO_Central"/>
</dbReference>
<dbReference type="GO" id="GO:0072542">
    <property type="term" value="F:protein phosphatase activator activity"/>
    <property type="evidence" value="ECO:0000318"/>
    <property type="project" value="GO_Central"/>
</dbReference>
<dbReference type="GO" id="GO:0006974">
    <property type="term" value="P:DNA damage response"/>
    <property type="evidence" value="ECO:0000318"/>
    <property type="project" value="GO_Central"/>
</dbReference>
<dbReference type="GO" id="GO:2000779">
    <property type="term" value="P:regulation of double-strand break repair"/>
    <property type="evidence" value="ECO:0000318"/>
    <property type="project" value="GO_Central"/>
</dbReference>
<dbReference type="FunFam" id="2.30.29.30:FF:000051">
    <property type="entry name" value="Serine/threonine-protein phosphatase 4 regulatory subunit 3B"/>
    <property type="match status" value="1"/>
</dbReference>
<dbReference type="Gene3D" id="1.25.10.10">
    <property type="entry name" value="Leucine-rich Repeat Variant"/>
    <property type="match status" value="1"/>
</dbReference>
<dbReference type="Gene3D" id="2.30.29.30">
    <property type="entry name" value="Pleckstrin-homology domain (PH domain)/Phosphotyrosine-binding domain (PTB)"/>
    <property type="match status" value="1"/>
</dbReference>
<dbReference type="InterPro" id="IPR011989">
    <property type="entry name" value="ARM-like"/>
</dbReference>
<dbReference type="InterPro" id="IPR016024">
    <property type="entry name" value="ARM-type_fold"/>
</dbReference>
<dbReference type="InterPro" id="IPR055236">
    <property type="entry name" value="EVH1_PP4R3"/>
</dbReference>
<dbReference type="InterPro" id="IPR006887">
    <property type="entry name" value="P4R3-like_central_dom"/>
</dbReference>
<dbReference type="InterPro" id="IPR011993">
    <property type="entry name" value="PH-like_dom_sf"/>
</dbReference>
<dbReference type="InterPro" id="IPR051137">
    <property type="entry name" value="PP4R3-like"/>
</dbReference>
<dbReference type="PANTHER" id="PTHR23318">
    <property type="entry name" value="ATP SYNTHASE GAMMA-RELATED"/>
    <property type="match status" value="1"/>
</dbReference>
<dbReference type="PANTHER" id="PTHR23318:SF18">
    <property type="entry name" value="SERINE_THREONINE-PROTEIN PHOSPHATASE 4 REGULATORY SUBUNIT 3B"/>
    <property type="match status" value="1"/>
</dbReference>
<dbReference type="Pfam" id="PF22972">
    <property type="entry name" value="EVH1_PP4R3"/>
    <property type="match status" value="1"/>
</dbReference>
<dbReference type="Pfam" id="PF04802">
    <property type="entry name" value="PP4R3"/>
    <property type="match status" value="1"/>
</dbReference>
<dbReference type="SUPFAM" id="SSF48371">
    <property type="entry name" value="ARM repeat"/>
    <property type="match status" value="1"/>
</dbReference>
<dbReference type="SUPFAM" id="SSF50729">
    <property type="entry name" value="PH domain-like"/>
    <property type="match status" value="1"/>
</dbReference>
<evidence type="ECO:0000250" key="1"/>
<evidence type="ECO:0000250" key="2">
    <source>
        <dbReference type="UniProtKB" id="Q5MIZ7"/>
    </source>
</evidence>
<evidence type="ECO:0000256" key="3">
    <source>
        <dbReference type="SAM" id="MobiDB-lite"/>
    </source>
</evidence>
<evidence type="ECO:0000305" key="4"/>
<name>P4R3B_XENLA</name>
<reference key="1">
    <citation type="submission" date="2003-03" db="EMBL/GenBank/DDBJ databases">
        <authorList>
            <consortium name="NIH - Xenopus Gene Collection (XGC) project"/>
        </authorList>
    </citation>
    <scope>NUCLEOTIDE SEQUENCE [LARGE SCALE MRNA]</scope>
    <source>
        <tissue>Embryo</tissue>
    </source>
</reference>
<sequence>MSDTRRRVKVYTLNEDRQWDDRGTGHVSSTYVDRLKGMSLLVRAESDGSLLLESKINPNTAYQKQQDTLIVWSEAENYDLALSFQEKAGCDEIWEKICQVQGKDPSVDVTQDPIDESEEERFEEMPETSNLIDLPTCELGKLEEIADLVTSVLSSPIRREKLALVLENEGYIKKLLQLFQTCENLDNTEGLHHLYEIIRGILFLNKAALFEVMFSDECIMDVVGCLEYDPALAQPKRHREFLTKTAKFKEVIPITDSELRQKIHQTYRVQYIQDVILPTPSVFEENFLSTLTSFIFFNKVEIVSMLQEDEKFLSEVFAQLTDEATDDDKRRELVNFFKEFCAFSQTLQPQNRDAFFKTLANLGILPALEIVMGMDDLQVRAAATDIFSYLVEFSPSMVREFVMQEAQQSDDDILLINVVIEQMICDSDPELGGAVQLMGLLRTLIDPENMLATANKTEKSEFLNFFYNHCMHVLTAPLLANTAEDKLEKDAVLGSIKTSTVCPDNFQTAQLLALILELLTFCVEHHTYHIKNYIMNKDLLRRVLILMNSKHTFLALCALRFMRRIIGLKDEFYNRYIIKGNLFEPVIHALLDNGTRYNLLNSAIIELFEFIRVEDIKSLTSHIVENFYKALESIEYVQTFKGLKTRYEQEKDRQSQKLSSVPSILRSNRFRRDARALEDDEELWFNEDDEEEGEAVVPPVEKTKPEDDFPEGYEKFLETKKAKELEDKENLPKRTSVGGFKFTFSHSVSAANGANSTNSKSVAAHTPPATSNGSSSKNTSLTTTVASTKGSLIGLVDYPDDEDEEEEEDTSPRKRPRLGS</sequence>
<keyword id="KW-1185">Reference proteome</keyword>
<comment type="function">
    <text evidence="1">Regulatory subunit of serine/threonine-protein phosphatase 4 (PP4).</text>
</comment>
<comment type="subunit">
    <text evidence="1">Serine/threonine-protein phosphatase 4 (PP4) occurs in different assemblies of the catalytic and one or more regulatory subunits.</text>
</comment>
<comment type="similarity">
    <text evidence="4">Belongs to the SMEK family.</text>
</comment>
<feature type="chain" id="PRO_0000254606" description="Serine/threonine-protein phosphatase 4 regulatory subunit 3-B">
    <location>
        <begin position="1"/>
        <end position="820"/>
    </location>
</feature>
<feature type="domain" description="WH1">
    <location>
        <begin position="1"/>
        <end position="100"/>
    </location>
</feature>
<feature type="region of interest" description="Disordered" evidence="3">
    <location>
        <begin position="682"/>
        <end position="711"/>
    </location>
</feature>
<feature type="region of interest" description="Disordered" evidence="3">
    <location>
        <begin position="750"/>
        <end position="820"/>
    </location>
</feature>
<feature type="compositionally biased region" description="Acidic residues" evidence="3">
    <location>
        <begin position="682"/>
        <end position="694"/>
    </location>
</feature>
<feature type="compositionally biased region" description="Basic and acidic residues" evidence="3">
    <location>
        <begin position="701"/>
        <end position="711"/>
    </location>
</feature>
<feature type="compositionally biased region" description="Polar residues" evidence="3">
    <location>
        <begin position="750"/>
        <end position="761"/>
    </location>
</feature>
<feature type="compositionally biased region" description="Polar residues" evidence="3">
    <location>
        <begin position="768"/>
        <end position="790"/>
    </location>
</feature>
<feature type="compositionally biased region" description="Acidic residues" evidence="3">
    <location>
        <begin position="798"/>
        <end position="809"/>
    </location>
</feature>
<gene>
    <name evidence="2" type="primary">ppp4r3b-b</name>
    <name type="synonym">smek2-b</name>
</gene>
<protein>
    <recommendedName>
        <fullName evidence="2">Serine/threonine-protein phosphatase 4 regulatory subunit 3-B</fullName>
    </recommendedName>
    <alternativeName>
        <fullName>SMEK homolog 2-B</fullName>
    </alternativeName>
</protein>
<proteinExistence type="evidence at transcript level"/>
<accession>Q801Q7</accession>